<dbReference type="EC" id="6.3.2.9" evidence="2"/>
<dbReference type="EMBL" id="X51584">
    <property type="protein sequence ID" value="CAA35933.1"/>
    <property type="molecule type" value="Genomic_DNA"/>
</dbReference>
<dbReference type="EMBL" id="X17609">
    <property type="protein sequence ID" value="CAA35611.1"/>
    <property type="molecule type" value="Genomic_DNA"/>
</dbReference>
<dbReference type="EMBL" id="X55034">
    <property type="protein sequence ID" value="CAA38865.1"/>
    <property type="molecule type" value="Genomic_DNA"/>
</dbReference>
<dbReference type="EMBL" id="M30807">
    <property type="protein sequence ID" value="AAA83858.1"/>
    <property type="molecule type" value="Genomic_DNA"/>
</dbReference>
<dbReference type="EMBL" id="U00096">
    <property type="protein sequence ID" value="AAC73199.1"/>
    <property type="molecule type" value="Genomic_DNA"/>
</dbReference>
<dbReference type="EMBL" id="AP009048">
    <property type="protein sequence ID" value="BAB96656.1"/>
    <property type="molecule type" value="Genomic_DNA"/>
</dbReference>
<dbReference type="PIR" id="S08396">
    <property type="entry name" value="CEECME"/>
</dbReference>
<dbReference type="RefSeq" id="NP_414630.1">
    <property type="nucleotide sequence ID" value="NC_000913.3"/>
</dbReference>
<dbReference type="RefSeq" id="WP_000796481.1">
    <property type="nucleotide sequence ID" value="NZ_SSZK01000004.1"/>
</dbReference>
<dbReference type="PDB" id="1E0D">
    <property type="method" value="X-ray"/>
    <property type="resolution" value="2.40 A"/>
    <property type="chains" value="A=2-438"/>
</dbReference>
<dbReference type="PDB" id="1EEH">
    <property type="method" value="X-ray"/>
    <property type="resolution" value="1.90 A"/>
    <property type="chains" value="A=2-438"/>
</dbReference>
<dbReference type="PDB" id="1UAG">
    <property type="method" value="X-ray"/>
    <property type="resolution" value="1.95 A"/>
    <property type="chains" value="A=2-438"/>
</dbReference>
<dbReference type="PDB" id="2JFF">
    <property type="method" value="X-ray"/>
    <property type="resolution" value="1.89 A"/>
    <property type="chains" value="A=2-438"/>
</dbReference>
<dbReference type="PDB" id="2JFG">
    <property type="method" value="X-ray"/>
    <property type="resolution" value="1.52 A"/>
    <property type="chains" value="A=2-438"/>
</dbReference>
<dbReference type="PDB" id="2JFH">
    <property type="method" value="X-ray"/>
    <property type="resolution" value="1.97 A"/>
    <property type="chains" value="A=2-438"/>
</dbReference>
<dbReference type="PDB" id="2UAG">
    <property type="method" value="X-ray"/>
    <property type="resolution" value="1.70 A"/>
    <property type="chains" value="A=2-438"/>
</dbReference>
<dbReference type="PDB" id="2UUO">
    <property type="method" value="X-ray"/>
    <property type="resolution" value="2.50 A"/>
    <property type="chains" value="A=2-438"/>
</dbReference>
<dbReference type="PDB" id="2UUP">
    <property type="method" value="X-ray"/>
    <property type="resolution" value="1.88 A"/>
    <property type="chains" value="A=2-438"/>
</dbReference>
<dbReference type="PDB" id="2VTD">
    <property type="method" value="X-ray"/>
    <property type="resolution" value="1.94 A"/>
    <property type="chains" value="A=1-438"/>
</dbReference>
<dbReference type="PDB" id="2VTE">
    <property type="method" value="X-ray"/>
    <property type="resolution" value="2.20 A"/>
    <property type="chains" value="A=1-438"/>
</dbReference>
<dbReference type="PDB" id="2WJP">
    <property type="method" value="X-ray"/>
    <property type="resolution" value="1.60 A"/>
    <property type="chains" value="A=2-438"/>
</dbReference>
<dbReference type="PDB" id="2X5O">
    <property type="method" value="X-ray"/>
    <property type="resolution" value="1.46 A"/>
    <property type="chains" value="A=2-438"/>
</dbReference>
<dbReference type="PDB" id="2XPC">
    <property type="method" value="X-ray"/>
    <property type="resolution" value="1.49 A"/>
    <property type="chains" value="A=2-438"/>
</dbReference>
<dbReference type="PDB" id="2Y1O">
    <property type="method" value="X-ray"/>
    <property type="resolution" value="1.49 A"/>
    <property type="chains" value="A=1-438"/>
</dbReference>
<dbReference type="PDB" id="2Y66">
    <property type="method" value="X-ray"/>
    <property type="resolution" value="1.49 A"/>
    <property type="chains" value="A=1-438"/>
</dbReference>
<dbReference type="PDB" id="2Y67">
    <property type="method" value="X-ray"/>
    <property type="resolution" value="1.85 A"/>
    <property type="chains" value="A=1-438"/>
</dbReference>
<dbReference type="PDB" id="2Y68">
    <property type="method" value="X-ray"/>
    <property type="resolution" value="1.49 A"/>
    <property type="chains" value="A=1-438"/>
</dbReference>
<dbReference type="PDB" id="3UAG">
    <property type="method" value="X-ray"/>
    <property type="resolution" value="1.77 A"/>
    <property type="chains" value="A=2-438"/>
</dbReference>
<dbReference type="PDB" id="4UAG">
    <property type="method" value="X-ray"/>
    <property type="resolution" value="1.66 A"/>
    <property type="chains" value="A=2-438"/>
</dbReference>
<dbReference type="PDB" id="5A5E">
    <property type="method" value="X-ray"/>
    <property type="resolution" value="1.84 A"/>
    <property type="chains" value="A=2-438"/>
</dbReference>
<dbReference type="PDB" id="5A5F">
    <property type="method" value="X-ray"/>
    <property type="resolution" value="1.90 A"/>
    <property type="chains" value="A=2-438"/>
</dbReference>
<dbReference type="PDB" id="8V8W">
    <property type="method" value="X-ray"/>
    <property type="resolution" value="1.65 A"/>
    <property type="chains" value="A=1-438"/>
</dbReference>
<dbReference type="PDB" id="8V8X">
    <property type="method" value="X-ray"/>
    <property type="resolution" value="2.30 A"/>
    <property type="chains" value="A=1-438"/>
</dbReference>
<dbReference type="PDB" id="8V8Y">
    <property type="method" value="X-ray"/>
    <property type="resolution" value="1.65 A"/>
    <property type="chains" value="A=1-438"/>
</dbReference>
<dbReference type="PDB" id="8VW0">
    <property type="method" value="X-ray"/>
    <property type="resolution" value="1.70 A"/>
    <property type="chains" value="A=1-438"/>
</dbReference>
<dbReference type="PDB" id="8VW1">
    <property type="method" value="X-ray"/>
    <property type="resolution" value="1.70 A"/>
    <property type="chains" value="A=1-438"/>
</dbReference>
<dbReference type="PDB" id="8VW2">
    <property type="method" value="X-ray"/>
    <property type="resolution" value="1.95 A"/>
    <property type="chains" value="A=1-438"/>
</dbReference>
<dbReference type="PDB" id="9BN8">
    <property type="method" value="X-ray"/>
    <property type="resolution" value="1.35 A"/>
    <property type="chains" value="A=1-438"/>
</dbReference>
<dbReference type="PDB" id="9BN9">
    <property type="method" value="X-ray"/>
    <property type="resolution" value="1.23 A"/>
    <property type="chains" value="A=1-438"/>
</dbReference>
<dbReference type="PDB" id="9DQW">
    <property type="method" value="X-ray"/>
    <property type="resolution" value="1.45 A"/>
    <property type="chains" value="A=1-438"/>
</dbReference>
<dbReference type="PDBsum" id="1E0D"/>
<dbReference type="PDBsum" id="1EEH"/>
<dbReference type="PDBsum" id="1UAG"/>
<dbReference type="PDBsum" id="2JFF"/>
<dbReference type="PDBsum" id="2JFG"/>
<dbReference type="PDBsum" id="2JFH"/>
<dbReference type="PDBsum" id="2UAG"/>
<dbReference type="PDBsum" id="2UUO"/>
<dbReference type="PDBsum" id="2UUP"/>
<dbReference type="PDBsum" id="2VTD"/>
<dbReference type="PDBsum" id="2VTE"/>
<dbReference type="PDBsum" id="2WJP"/>
<dbReference type="PDBsum" id="2X5O"/>
<dbReference type="PDBsum" id="2XPC"/>
<dbReference type="PDBsum" id="2Y1O"/>
<dbReference type="PDBsum" id="2Y66"/>
<dbReference type="PDBsum" id="2Y67"/>
<dbReference type="PDBsum" id="2Y68"/>
<dbReference type="PDBsum" id="3UAG"/>
<dbReference type="PDBsum" id="4UAG"/>
<dbReference type="PDBsum" id="5A5E"/>
<dbReference type="PDBsum" id="5A5F"/>
<dbReference type="PDBsum" id="8V8W"/>
<dbReference type="PDBsum" id="8V8X"/>
<dbReference type="PDBsum" id="8V8Y"/>
<dbReference type="PDBsum" id="8VW0"/>
<dbReference type="PDBsum" id="8VW1"/>
<dbReference type="PDBsum" id="8VW2"/>
<dbReference type="PDBsum" id="9BN8"/>
<dbReference type="PDBsum" id="9BN9"/>
<dbReference type="PDBsum" id="9DQW"/>
<dbReference type="SMR" id="P14900"/>
<dbReference type="BioGRID" id="4261477">
    <property type="interactions" value="567"/>
</dbReference>
<dbReference type="BioGRID" id="849219">
    <property type="interactions" value="5"/>
</dbReference>
<dbReference type="DIP" id="DIP-10279N"/>
<dbReference type="FunCoup" id="P14900">
    <property type="interactions" value="768"/>
</dbReference>
<dbReference type="IntAct" id="P14900">
    <property type="interactions" value="8"/>
</dbReference>
<dbReference type="STRING" id="511145.b0088"/>
<dbReference type="BindingDB" id="P14900"/>
<dbReference type="ChEMBL" id="CHEMBL4732"/>
<dbReference type="DrugBank" id="DB03801">
    <property type="generic name" value="Lysine Nz-Carboxylic Acid"/>
</dbReference>
<dbReference type="DrugBank" id="DB08112">
    <property type="generic name" value="N-({6-[(4-CYANO-2-FLUOROBENZYL)OXY]NAPHTHALEN-2-YL}SULFONYL)-D-GLUTAMIC ACID"/>
</dbReference>
<dbReference type="DrugBank" id="DB08108">
    <property type="generic name" value="N-({6-[(4-CYANOBENZYL)OXY]NAPHTHALEN-2-YL}SULFONYL)-D-GLUTAMIC ACID"/>
</dbReference>
<dbReference type="DrugBank" id="DB08106">
    <property type="generic name" value="N-[(6-butoxynaphthalen-2-yl)sulfonyl]-D-glutamic acid"/>
</dbReference>
<dbReference type="DrugBank" id="DB08105">
    <property type="generic name" value="N-[(6-butoxynaphthalen-2-yl)sulfonyl]-L-glutamic acid"/>
</dbReference>
<dbReference type="DrugBank" id="DB08107">
    <property type="generic name" value="N-{[6-(PENTYLOXY)NAPHTHALEN-2-YL]SULFONYL}-D-GLUTAMIC ACID"/>
</dbReference>
<dbReference type="DrugBank" id="DB01673">
    <property type="generic name" value="Uridine-5'-Diphosphate-N-Acetylmuramoyl-L-Alanine"/>
</dbReference>
<dbReference type="DrugBank" id="DB02314">
    <property type="generic name" value="Uridine-5'-Diphosphate-N-Acetylmuramoyl-L-Alanine-D-Glutamate"/>
</dbReference>
<dbReference type="jPOST" id="P14900"/>
<dbReference type="PaxDb" id="511145-b0088"/>
<dbReference type="EnsemblBacteria" id="AAC73199">
    <property type="protein sequence ID" value="AAC73199"/>
    <property type="gene ID" value="b0088"/>
</dbReference>
<dbReference type="GeneID" id="944818"/>
<dbReference type="KEGG" id="ecj:JW0086"/>
<dbReference type="KEGG" id="eco:b0088"/>
<dbReference type="KEGG" id="ecoc:C3026_00345"/>
<dbReference type="PATRIC" id="fig|1411691.4.peg.2192"/>
<dbReference type="EchoBASE" id="EB0615"/>
<dbReference type="eggNOG" id="COG0771">
    <property type="taxonomic scope" value="Bacteria"/>
</dbReference>
<dbReference type="HOGENOM" id="CLU_032540_1_0_6"/>
<dbReference type="InParanoid" id="P14900"/>
<dbReference type="OMA" id="CSSFDMF"/>
<dbReference type="OrthoDB" id="9809796at2"/>
<dbReference type="PhylomeDB" id="P14900"/>
<dbReference type="BioCyc" id="EcoCyc:UDP-NACMURALA-GLU-LIG-MONOMER"/>
<dbReference type="BioCyc" id="MetaCyc:UDP-NACMURALA-GLU-LIG-MONOMER"/>
<dbReference type="BRENDA" id="6.3.2.9">
    <property type="organism ID" value="2026"/>
</dbReference>
<dbReference type="SABIO-RK" id="P14900"/>
<dbReference type="UniPathway" id="UPA00219"/>
<dbReference type="EvolutionaryTrace" id="P14900"/>
<dbReference type="PRO" id="PR:P14900"/>
<dbReference type="Proteomes" id="UP000000625">
    <property type="component" value="Chromosome"/>
</dbReference>
<dbReference type="GO" id="GO:0005737">
    <property type="term" value="C:cytoplasm"/>
    <property type="evidence" value="ECO:0000314"/>
    <property type="project" value="EcoliWiki"/>
</dbReference>
<dbReference type="GO" id="GO:0005524">
    <property type="term" value="F:ATP binding"/>
    <property type="evidence" value="ECO:0007669"/>
    <property type="project" value="UniProtKB-UniRule"/>
</dbReference>
<dbReference type="GO" id="GO:0042802">
    <property type="term" value="F:identical protein binding"/>
    <property type="evidence" value="ECO:0000353"/>
    <property type="project" value="IntAct"/>
</dbReference>
<dbReference type="GO" id="GO:0008764">
    <property type="term" value="F:UDP-N-acetylmuramoylalanine-D-glutamate ligase activity"/>
    <property type="evidence" value="ECO:0000314"/>
    <property type="project" value="EcoCyc"/>
</dbReference>
<dbReference type="GO" id="GO:0051301">
    <property type="term" value="P:cell division"/>
    <property type="evidence" value="ECO:0007669"/>
    <property type="project" value="UniProtKB-KW"/>
</dbReference>
<dbReference type="GO" id="GO:0071555">
    <property type="term" value="P:cell wall organization"/>
    <property type="evidence" value="ECO:0007669"/>
    <property type="project" value="UniProtKB-KW"/>
</dbReference>
<dbReference type="GO" id="GO:0009252">
    <property type="term" value="P:peptidoglycan biosynthetic process"/>
    <property type="evidence" value="ECO:0000314"/>
    <property type="project" value="EcoCyc"/>
</dbReference>
<dbReference type="GO" id="GO:0008360">
    <property type="term" value="P:regulation of cell shape"/>
    <property type="evidence" value="ECO:0007669"/>
    <property type="project" value="UniProtKB-KW"/>
</dbReference>
<dbReference type="FunFam" id="3.40.1190.10:FF:000002">
    <property type="entry name" value="UDP-N-acetylmuramoylalanine--D-glutamate ligase"/>
    <property type="match status" value="1"/>
</dbReference>
<dbReference type="FunFam" id="3.40.50.720:FF:000126">
    <property type="entry name" value="UDP-N-acetylmuramoylalanine--D-glutamate ligase"/>
    <property type="match status" value="1"/>
</dbReference>
<dbReference type="FunFam" id="3.90.190.20:FF:000003">
    <property type="entry name" value="UDP-N-acetylmuramoylalanine--D-glutamate ligase"/>
    <property type="match status" value="1"/>
</dbReference>
<dbReference type="Gene3D" id="3.90.190.20">
    <property type="entry name" value="Mur ligase, C-terminal domain"/>
    <property type="match status" value="1"/>
</dbReference>
<dbReference type="Gene3D" id="3.40.1190.10">
    <property type="entry name" value="Mur-like, catalytic domain"/>
    <property type="match status" value="1"/>
</dbReference>
<dbReference type="Gene3D" id="3.40.50.720">
    <property type="entry name" value="NAD(P)-binding Rossmann-like Domain"/>
    <property type="match status" value="1"/>
</dbReference>
<dbReference type="HAMAP" id="MF_00639">
    <property type="entry name" value="MurD"/>
    <property type="match status" value="1"/>
</dbReference>
<dbReference type="InterPro" id="IPR036565">
    <property type="entry name" value="Mur-like_cat_sf"/>
</dbReference>
<dbReference type="InterPro" id="IPR004101">
    <property type="entry name" value="Mur_ligase_C"/>
</dbReference>
<dbReference type="InterPro" id="IPR036615">
    <property type="entry name" value="Mur_ligase_C_dom_sf"/>
</dbReference>
<dbReference type="InterPro" id="IPR013221">
    <property type="entry name" value="Mur_ligase_cen"/>
</dbReference>
<dbReference type="InterPro" id="IPR005762">
    <property type="entry name" value="MurD"/>
</dbReference>
<dbReference type="NCBIfam" id="TIGR01087">
    <property type="entry name" value="murD"/>
    <property type="match status" value="1"/>
</dbReference>
<dbReference type="PANTHER" id="PTHR43692">
    <property type="entry name" value="UDP-N-ACETYLMURAMOYLALANINE--D-GLUTAMATE LIGASE"/>
    <property type="match status" value="1"/>
</dbReference>
<dbReference type="PANTHER" id="PTHR43692:SF1">
    <property type="entry name" value="UDP-N-ACETYLMURAMOYLALANINE--D-GLUTAMATE LIGASE"/>
    <property type="match status" value="1"/>
</dbReference>
<dbReference type="Pfam" id="PF02875">
    <property type="entry name" value="Mur_ligase_C"/>
    <property type="match status" value="1"/>
</dbReference>
<dbReference type="Pfam" id="PF08245">
    <property type="entry name" value="Mur_ligase_M"/>
    <property type="match status" value="1"/>
</dbReference>
<dbReference type="Pfam" id="PF21799">
    <property type="entry name" value="MurD-like_N"/>
    <property type="match status" value="1"/>
</dbReference>
<dbReference type="SUPFAM" id="SSF51984">
    <property type="entry name" value="MurCD N-terminal domain"/>
    <property type="match status" value="1"/>
</dbReference>
<dbReference type="SUPFAM" id="SSF53623">
    <property type="entry name" value="MurD-like peptide ligases, catalytic domain"/>
    <property type="match status" value="1"/>
</dbReference>
<dbReference type="SUPFAM" id="SSF53244">
    <property type="entry name" value="MurD-like peptide ligases, peptide-binding domain"/>
    <property type="match status" value="1"/>
</dbReference>
<reference key="1">
    <citation type="journal article" date="1990" name="Nucleic Acids Res.">
        <title>Nucleotide sequence involving murD and an open reading frame ORF-Y spacing murF and ftsW in Escherichia coli.</title>
        <authorList>
            <person name="Ikeda M."/>
            <person name="Wachi M."/>
            <person name="Ishino F."/>
            <person name="Matsuhashi M."/>
        </authorList>
    </citation>
    <scope>NUCLEOTIDE SEQUENCE [GENOMIC DNA]</scope>
    <source>
        <strain>K12</strain>
    </source>
</reference>
<reference key="2">
    <citation type="journal article" date="1990" name="Nucleic Acids Res.">
        <title>Nucleotide sequence of the murD gene encoding the UDP-MurNAc-L-Ala-D-Glu synthetase of Escherichia coli.</title>
        <authorList>
            <person name="Mengin-Lecreulx D."/>
            <person name="van Heijenoort J."/>
        </authorList>
    </citation>
    <scope>NUCLEOTIDE SEQUENCE [GENOMIC DNA]</scope>
    <source>
        <strain>K12</strain>
    </source>
</reference>
<reference key="3">
    <citation type="submission" date="1990-03" db="EMBL/GenBank/DDBJ databases">
        <authorList>
            <person name="Flouret B."/>
        </authorList>
    </citation>
    <scope>NUCLEOTIDE SEQUENCE [GENOMIC DNA]</scope>
</reference>
<reference key="4">
    <citation type="journal article" date="1992" name="Nucleic Acids Res.">
        <title>Systematic sequencing of the Escherichia coli genome: analysis of the 0-2.4 min region.</title>
        <authorList>
            <person name="Yura T."/>
            <person name="Mori H."/>
            <person name="Nagai H."/>
            <person name="Nagata T."/>
            <person name="Ishihama A."/>
            <person name="Fujita N."/>
            <person name="Isono K."/>
            <person name="Mizobuchi K."/>
            <person name="Nakata A."/>
        </authorList>
    </citation>
    <scope>NUCLEOTIDE SEQUENCE [LARGE SCALE GENOMIC DNA]</scope>
    <source>
        <strain>K12</strain>
    </source>
</reference>
<reference key="5">
    <citation type="journal article" date="1997" name="Science">
        <title>The complete genome sequence of Escherichia coli K-12.</title>
        <authorList>
            <person name="Blattner F.R."/>
            <person name="Plunkett G. III"/>
            <person name="Bloch C.A."/>
            <person name="Perna N.T."/>
            <person name="Burland V."/>
            <person name="Riley M."/>
            <person name="Collado-Vides J."/>
            <person name="Glasner J.D."/>
            <person name="Rode C.K."/>
            <person name="Mayhew G.F."/>
            <person name="Gregor J."/>
            <person name="Davis N.W."/>
            <person name="Kirkpatrick H.A."/>
            <person name="Goeden M.A."/>
            <person name="Rose D.J."/>
            <person name="Mau B."/>
            <person name="Shao Y."/>
        </authorList>
    </citation>
    <scope>NUCLEOTIDE SEQUENCE [LARGE SCALE GENOMIC DNA]</scope>
    <source>
        <strain>K12 / MG1655 / ATCC 47076</strain>
    </source>
</reference>
<reference key="6">
    <citation type="journal article" date="2006" name="Mol. Syst. Biol.">
        <title>Highly accurate genome sequences of Escherichia coli K-12 strains MG1655 and W3110.</title>
        <authorList>
            <person name="Hayashi K."/>
            <person name="Morooka N."/>
            <person name="Yamamoto Y."/>
            <person name="Fujita K."/>
            <person name="Isono K."/>
            <person name="Choi S."/>
            <person name="Ohtsubo E."/>
            <person name="Baba T."/>
            <person name="Wanner B.L."/>
            <person name="Mori H."/>
            <person name="Horiuchi T."/>
        </authorList>
    </citation>
    <scope>NUCLEOTIDE SEQUENCE [LARGE SCALE GENOMIC DNA]</scope>
    <source>
        <strain>K12 / W3110 / ATCC 27325 / DSM 5911</strain>
    </source>
</reference>
<reference key="7">
    <citation type="journal article" date="1989" name="J. Bacteriol.">
        <title>Structural similarity among Escherichia coli FtsW and RodA proteins and Bacillus subtilis SpoVE protein, which function in cell division, cell elongation, and spore formation, respectively.</title>
        <authorList>
            <person name="Ikeda M."/>
            <person name="Sato T."/>
            <person name="Wachi M."/>
            <person name="Jung H.K."/>
            <person name="Ishino F."/>
            <person name="Kobayashi Y."/>
            <person name="Matsuhashi M."/>
        </authorList>
    </citation>
    <scope>NUCLEOTIDE SEQUENCE [GENOMIC DNA] OF 376-438</scope>
    <source>
        <strain>K12</strain>
    </source>
</reference>
<reference key="8">
    <citation type="journal article" date="1991" name="Eur. J. Biochem.">
        <title>Over-production, purification and properties of the uridine diphosphate N-acetylmuramoyl-L-alanine:D-glutamate ligase from Escherichia coli.</title>
        <authorList>
            <person name="Pratviel-Sosa F."/>
            <person name="Mengin-Lecreulx D."/>
            <person name="van Heijenoort J."/>
        </authorList>
    </citation>
    <scope>PROTEIN SEQUENCE OF 2-20</scope>
    <scope>CATALYTIC ACTIVITY</scope>
    <scope>FUNCTION</scope>
    <scope>BIOPHYSICOCHEMICAL PROPERTIES</scope>
    <source>
        <strain>K12</strain>
    </source>
</reference>
<reference key="9">
    <citation type="journal article" date="1997" name="EMBO J.">
        <title>Crystal structure of UDP-N-acetylmuramoyl-L-alanine:D-glutamate ligase from Escherichia coli.</title>
        <authorList>
            <person name="Bertrand J.A."/>
            <person name="Auger G."/>
            <person name="Fanchon E."/>
            <person name="Martin L."/>
            <person name="Blanot D."/>
            <person name="van Heijenoort J."/>
            <person name="Dideberg O."/>
        </authorList>
    </citation>
    <scope>X-RAY CRYSTALLOGRAPHY (1.95 ANGSTROMS)</scope>
</reference>
<reference key="10">
    <citation type="journal article" date="2000" name="J. Mol. Biol.">
        <title>'Open' structures of MurD: domain movements and structural similarities with folylpolyglutamate synthetase.</title>
        <authorList>
            <person name="Bertrand J.A."/>
            <person name="Fanchon E."/>
            <person name="Martin L."/>
            <person name="Chantalat L."/>
            <person name="Auger G."/>
            <person name="Blanot D."/>
            <person name="van Heijenoort J."/>
            <person name="Dideberg O."/>
        </authorList>
    </citation>
    <scope>X-RAY CRYSTALLOGRAPHY (1.9 ANGSTROMS)</scope>
</reference>
<accession>P14900</accession>
<organism>
    <name type="scientific">Escherichia coli (strain K12)</name>
    <dbReference type="NCBI Taxonomy" id="83333"/>
    <lineage>
        <taxon>Bacteria</taxon>
        <taxon>Pseudomonadati</taxon>
        <taxon>Pseudomonadota</taxon>
        <taxon>Gammaproteobacteria</taxon>
        <taxon>Enterobacterales</taxon>
        <taxon>Enterobacteriaceae</taxon>
        <taxon>Escherichia</taxon>
    </lineage>
</organism>
<evidence type="ECO:0000255" key="1"/>
<evidence type="ECO:0000269" key="2">
    <source>
    </source>
</evidence>
<evidence type="ECO:0000303" key="3">
    <source>
    </source>
</evidence>
<evidence type="ECO:0000305" key="4"/>
<evidence type="ECO:0000305" key="5">
    <source>
    </source>
</evidence>
<evidence type="ECO:0007829" key="6">
    <source>
        <dbReference type="PDB" id="1EEH"/>
    </source>
</evidence>
<evidence type="ECO:0007829" key="7">
    <source>
        <dbReference type="PDB" id="2X5O"/>
    </source>
</evidence>
<evidence type="ECO:0007829" key="8">
    <source>
        <dbReference type="PDB" id="8V8W"/>
    </source>
</evidence>
<name>MURD_ECOLI</name>
<protein>
    <recommendedName>
        <fullName evidence="3">UDP-N-acetylmuramoylalanine--D-glutamate ligase</fullName>
        <ecNumber evidence="2">6.3.2.9</ecNumber>
    </recommendedName>
    <alternativeName>
        <fullName>D-glutamic acid-adding enzyme</fullName>
    </alternativeName>
    <alternativeName>
        <fullName>UDP-N-acetylmuramoyl-L-alanyl-D-glutamate synthetase</fullName>
    </alternativeName>
</protein>
<gene>
    <name type="primary">murD</name>
    <name type="ordered locus">b0088</name>
    <name type="ordered locus">JW0086</name>
</gene>
<keyword id="KW-0002">3D-structure</keyword>
<keyword id="KW-0067">ATP-binding</keyword>
<keyword id="KW-0131">Cell cycle</keyword>
<keyword id="KW-0132">Cell division</keyword>
<keyword id="KW-0133">Cell shape</keyword>
<keyword id="KW-0961">Cell wall biogenesis/degradation</keyword>
<keyword id="KW-0963">Cytoplasm</keyword>
<keyword id="KW-0903">Direct protein sequencing</keyword>
<keyword id="KW-0436">Ligase</keyword>
<keyword id="KW-0547">Nucleotide-binding</keyword>
<keyword id="KW-0573">Peptidoglycan synthesis</keyword>
<keyword id="KW-1185">Reference proteome</keyword>
<comment type="function">
    <text evidence="2 4">Cell wall formation (Probable). Catalyzes the addition of glutamate to the nucleotide precursor UDP-N-acetylmuramoyl-L-alanine (UMA) (PubMed:1765076).</text>
</comment>
<comment type="catalytic activity">
    <reaction evidence="2">
        <text>UDP-N-acetyl-alpha-D-muramoyl-L-alanine + D-glutamate + ATP = UDP-N-acetyl-alpha-D-muramoyl-L-alanyl-D-glutamate + ADP + phosphate + H(+)</text>
        <dbReference type="Rhea" id="RHEA:16429"/>
        <dbReference type="ChEBI" id="CHEBI:15378"/>
        <dbReference type="ChEBI" id="CHEBI:29986"/>
        <dbReference type="ChEBI" id="CHEBI:30616"/>
        <dbReference type="ChEBI" id="CHEBI:43474"/>
        <dbReference type="ChEBI" id="CHEBI:83898"/>
        <dbReference type="ChEBI" id="CHEBI:83900"/>
        <dbReference type="ChEBI" id="CHEBI:456216"/>
        <dbReference type="EC" id="6.3.2.9"/>
    </reaction>
</comment>
<comment type="cofactor">
    <cofactor evidence="5">
        <name>Mg(2+)</name>
        <dbReference type="ChEBI" id="CHEBI:18420"/>
    </cofactor>
</comment>
<comment type="biophysicochemical properties">
    <kinetics>
        <KM evidence="2">7.5 uM for UDP-N-acetylmuramoyl-L-alanine</KM>
        <KM evidence="2">55 uM for D-glutamate</KM>
        <KM evidence="2">138 uM for ATP/ Mg(2+)</KM>
        <text evidence="2">The optimum activity is at 11-16 mM for potassium phosphate and at 5 mM for Mg(2+).</text>
    </kinetics>
    <phDependence>
        <text evidence="5">Optimum pH is 9.0.</text>
    </phDependence>
</comment>
<comment type="pathway">
    <text>Cell wall biogenesis; peptidoglycan biosynthesis.</text>
</comment>
<comment type="interaction">
    <interactant intactId="EBI-554780">
        <id>P14900</id>
    </interactant>
    <interactant intactId="EBI-554780">
        <id>P14900</id>
        <label>murD</label>
    </interactant>
    <organismsDiffer>false</organismsDiffer>
    <experiments>3</experiments>
</comment>
<comment type="interaction">
    <interactant intactId="EBI-554780">
        <id>P14900</id>
    </interactant>
    <interactant intactId="EBI-549392">
        <id>P0AGG4</id>
        <label>trxC</label>
    </interactant>
    <organismsDiffer>false</organismsDiffer>
    <experiments>2</experiments>
</comment>
<comment type="subcellular location">
    <subcellularLocation>
        <location>Cytoplasm</location>
    </subcellularLocation>
</comment>
<comment type="similarity">
    <text evidence="4">Belongs to the MurCDEF family.</text>
</comment>
<feature type="initiator methionine" description="Removed" evidence="2">
    <location>
        <position position="1"/>
    </location>
</feature>
<feature type="chain" id="PRO_0000109013" description="UDP-N-acetylmuramoylalanine--D-glutamate ligase">
    <location>
        <begin position="2"/>
        <end position="438"/>
    </location>
</feature>
<feature type="binding site" evidence="1">
    <location>
        <begin position="112"/>
        <end position="118"/>
    </location>
    <ligand>
        <name>ATP</name>
        <dbReference type="ChEBI" id="CHEBI:30616"/>
    </ligand>
</feature>
<feature type="sequence conflict" description="In Ref. 2; CAA35611." evidence="4" ref="2">
    <original>R</original>
    <variation>A</variation>
    <location>
        <position position="28"/>
    </location>
</feature>
<feature type="sequence conflict" description="In Ref. 2; CAA35611." evidence="4" ref="2">
    <original>A</original>
    <variation>T</variation>
    <location>
        <position position="174"/>
    </location>
</feature>
<feature type="sequence conflict" description="In Ref. 2; CAA35611." evidence="4" ref="2">
    <original>AL</original>
    <variation>RV</variation>
    <location>
        <begin position="276"/>
        <end position="277"/>
    </location>
</feature>
<feature type="strand" evidence="7">
    <location>
        <begin position="9"/>
        <end position="12"/>
    </location>
</feature>
<feature type="helix" evidence="7">
    <location>
        <begin position="15"/>
        <end position="26"/>
    </location>
</feature>
<feature type="turn" evidence="7">
    <location>
        <begin position="27"/>
        <end position="29"/>
    </location>
</feature>
<feature type="strand" evidence="7">
    <location>
        <begin position="33"/>
        <end position="40"/>
    </location>
</feature>
<feature type="helix" evidence="7">
    <location>
        <begin position="44"/>
        <end position="46"/>
    </location>
</feature>
<feature type="strand" evidence="7">
    <location>
        <begin position="53"/>
        <end position="57"/>
    </location>
</feature>
<feature type="helix" evidence="7">
    <location>
        <begin position="60"/>
        <end position="64"/>
    </location>
</feature>
<feature type="strand" evidence="7">
    <location>
        <begin position="67"/>
        <end position="71"/>
    </location>
</feature>
<feature type="helix" evidence="8">
    <location>
        <begin position="75"/>
        <end position="78"/>
    </location>
</feature>
<feature type="helix" evidence="7">
    <location>
        <begin position="80"/>
        <end position="87"/>
    </location>
</feature>
<feature type="strand" evidence="7">
    <location>
        <begin position="91"/>
        <end position="93"/>
    </location>
</feature>
<feature type="helix" evidence="7">
    <location>
        <begin position="95"/>
        <end position="102"/>
    </location>
</feature>
<feature type="strand" evidence="7">
    <location>
        <begin position="107"/>
        <end position="111"/>
    </location>
</feature>
<feature type="strand" evidence="7">
    <location>
        <begin position="113"/>
        <end position="115"/>
    </location>
</feature>
<feature type="helix" evidence="7">
    <location>
        <begin position="116"/>
        <end position="129"/>
    </location>
</feature>
<feature type="strand" evidence="7">
    <location>
        <begin position="134"/>
        <end position="142"/>
    </location>
</feature>
<feature type="helix" evidence="7">
    <location>
        <begin position="144"/>
        <end position="147"/>
    </location>
</feature>
<feature type="strand" evidence="7">
    <location>
        <begin position="154"/>
        <end position="158"/>
    </location>
</feature>
<feature type="helix" evidence="7">
    <location>
        <begin position="161"/>
        <end position="165"/>
    </location>
</feature>
<feature type="strand" evidence="7">
    <location>
        <begin position="173"/>
        <end position="177"/>
    </location>
</feature>
<feature type="helix" evidence="7">
    <location>
        <begin position="185"/>
        <end position="187"/>
    </location>
</feature>
<feature type="helix" evidence="7">
    <location>
        <begin position="191"/>
        <end position="200"/>
    </location>
</feature>
<feature type="helix" evidence="7">
    <location>
        <begin position="201"/>
        <end position="203"/>
    </location>
</feature>
<feature type="strand" evidence="7">
    <location>
        <begin position="207"/>
        <end position="212"/>
    </location>
</feature>
<feature type="helix" evidence="7">
    <location>
        <begin position="216"/>
        <end position="218"/>
    </location>
</feature>
<feature type="strand" evidence="6">
    <location>
        <begin position="221"/>
        <end position="223"/>
    </location>
</feature>
<feature type="strand" evidence="7">
    <location>
        <begin position="229"/>
        <end position="231"/>
    </location>
</feature>
<feature type="strand" evidence="7">
    <location>
        <begin position="233"/>
        <end position="243"/>
    </location>
</feature>
<feature type="strand" evidence="7">
    <location>
        <begin position="246"/>
        <end position="251"/>
    </location>
</feature>
<feature type="strand" evidence="7">
    <location>
        <begin position="254"/>
        <end position="258"/>
    </location>
</feature>
<feature type="helix" evidence="7">
    <location>
        <begin position="259"/>
        <end position="261"/>
    </location>
</feature>
<feature type="helix" evidence="7">
    <location>
        <begin position="267"/>
        <end position="282"/>
    </location>
</feature>
<feature type="helix" evidence="7">
    <location>
        <begin position="287"/>
        <end position="296"/>
    </location>
</feature>
<feature type="strand" evidence="7">
    <location>
        <begin position="303"/>
        <end position="310"/>
    </location>
</feature>
<feature type="strand" evidence="7">
    <location>
        <begin position="313"/>
        <end position="317"/>
    </location>
</feature>
<feature type="helix" evidence="7">
    <location>
        <begin position="324"/>
        <end position="331"/>
    </location>
</feature>
<feature type="strand" evidence="7">
    <location>
        <begin position="340"/>
        <end position="347"/>
    </location>
</feature>
<feature type="helix" evidence="6">
    <location>
        <begin position="350"/>
        <end position="352"/>
    </location>
</feature>
<feature type="helix" evidence="7">
    <location>
        <begin position="354"/>
        <end position="359"/>
    </location>
</feature>
<feature type="strand" evidence="7">
    <location>
        <begin position="362"/>
        <end position="371"/>
    </location>
</feature>
<feature type="helix" evidence="7">
    <location>
        <begin position="374"/>
        <end position="378"/>
    </location>
</feature>
<feature type="helix" evidence="7">
    <location>
        <begin position="382"/>
        <end position="384"/>
    </location>
</feature>
<feature type="strand" evidence="7">
    <location>
        <begin position="385"/>
        <end position="387"/>
    </location>
</feature>
<feature type="helix" evidence="7">
    <location>
        <begin position="391"/>
        <end position="398"/>
    </location>
</feature>
<feature type="helix" evidence="7">
    <location>
        <begin position="399"/>
        <end position="401"/>
    </location>
</feature>
<feature type="strand" evidence="7">
    <location>
        <begin position="407"/>
        <end position="410"/>
    </location>
</feature>
<feature type="strand" evidence="7">
    <location>
        <begin position="413"/>
        <end position="416"/>
    </location>
</feature>
<feature type="turn" evidence="7">
    <location>
        <begin position="417"/>
        <end position="419"/>
    </location>
</feature>
<feature type="strand" evidence="7">
    <location>
        <begin position="420"/>
        <end position="422"/>
    </location>
</feature>
<feature type="helix" evidence="7">
    <location>
        <begin position="423"/>
        <end position="437"/>
    </location>
</feature>
<proteinExistence type="evidence at protein level"/>
<sequence length="438" mass="46974">MADYQGKNVVIIGLGLTGLSCVDFFLARGVTPRVMDTRMTPPGLDKLPEAVERHTGSLNDEWLMAADLIVASPGIALAHPSLSAAADAGIEIVGDIELFCREAQAPIVAITGSNGKSTVTTLVGEMAKAAGVNVGVGGNIGLPALMLLDDECELYVLELSSFQLETTSSLQAVAATILNVTEDHMDRYPFGLQQYRAAKLRIYENAKVCVVNADDALTMPIRGADERCVSFGVNMGDYHLNHQQGETWLRVKGEKVLNVKEMKLSGQHNYTNALAALALADAAGLPRASSLKALTTFTGLPHRFEVVLEHNGVRWINDSKATNVGSTEAALNGLHVDGTLHLLLGGDGKSADFSPLARYLNGDNVRLYCFGRDGAQLAALRPEVAEQTETMEQAMRLLAPRVQPGDMVLLSPACASLDQFKNFEQRGNEFARLAKELG</sequence>